<dbReference type="EMBL" id="BC105865">
    <property type="protein sequence ID" value="AAI05866.1"/>
    <property type="molecule type" value="mRNA"/>
</dbReference>
<dbReference type="RefSeq" id="NP_001030007.1">
    <property type="nucleotide sequence ID" value="NM_001034835.1"/>
</dbReference>
<dbReference type="RefSeq" id="XP_063123219.1">
    <property type="nucleotide sequence ID" value="XM_063267149.1"/>
</dbReference>
<dbReference type="RefSeq" id="XP_063123220.1">
    <property type="nucleotide sequence ID" value="XM_063267150.1"/>
</dbReference>
<dbReference type="RefSeq" id="XP_063123221.1">
    <property type="nucleotide sequence ID" value="XM_063267151.1"/>
</dbReference>
<dbReference type="RefSeq" id="XP_063123222.1">
    <property type="nucleotide sequence ID" value="XM_063267152.1"/>
</dbReference>
<dbReference type="SMR" id="Q3KR73"/>
<dbReference type="FunCoup" id="Q3KR73">
    <property type="interactions" value="2590"/>
</dbReference>
<dbReference type="STRING" id="10116.ENSRNOP00000073261"/>
<dbReference type="ESTHER" id="rat-Kansl3">
    <property type="family name" value="NLS3-Tex30"/>
</dbReference>
<dbReference type="GlyGen" id="Q3KR73">
    <property type="glycosylation" value="1 site"/>
</dbReference>
<dbReference type="iPTMnet" id="Q3KR73"/>
<dbReference type="PhosphoSitePlus" id="Q3KR73"/>
<dbReference type="PaxDb" id="10116-ENSRNOP00000020955"/>
<dbReference type="GeneID" id="316328"/>
<dbReference type="KEGG" id="rno:316328"/>
<dbReference type="UCSC" id="RGD:1309220">
    <property type="organism name" value="rat"/>
</dbReference>
<dbReference type="AGR" id="RGD:1309220"/>
<dbReference type="CTD" id="55683"/>
<dbReference type="RGD" id="1309220">
    <property type="gene designation" value="Kansl3"/>
</dbReference>
<dbReference type="VEuPathDB" id="HostDB:ENSRNOG00000015417"/>
<dbReference type="eggNOG" id="KOG3253">
    <property type="taxonomic scope" value="Eukaryota"/>
</dbReference>
<dbReference type="InParanoid" id="Q3KR73"/>
<dbReference type="OrthoDB" id="6415022at2759"/>
<dbReference type="Reactome" id="R-RNO-3214847">
    <property type="pathway name" value="HATs acetylate histones"/>
</dbReference>
<dbReference type="Reactome" id="R-RNO-9772755">
    <property type="pathway name" value="Formation of WDR5-containing histone-modifying complexes"/>
</dbReference>
<dbReference type="PRO" id="PR:Q3KR73"/>
<dbReference type="Proteomes" id="UP000002494">
    <property type="component" value="Chromosome 9"/>
</dbReference>
<dbReference type="Bgee" id="ENSRNOG00000015417">
    <property type="expression patterns" value="Expressed in testis and 20 other cell types or tissues"/>
</dbReference>
<dbReference type="ExpressionAtlas" id="Q3KR73">
    <property type="expression patterns" value="baseline and differential"/>
</dbReference>
<dbReference type="GO" id="GO:0000123">
    <property type="term" value="C:histone acetyltransferase complex"/>
    <property type="evidence" value="ECO:0000250"/>
    <property type="project" value="UniProtKB"/>
</dbReference>
<dbReference type="GO" id="GO:0005739">
    <property type="term" value="C:mitochondrion"/>
    <property type="evidence" value="ECO:0000250"/>
    <property type="project" value="UniProtKB"/>
</dbReference>
<dbReference type="GO" id="GO:0044545">
    <property type="term" value="C:NSL complex"/>
    <property type="evidence" value="ECO:0000250"/>
    <property type="project" value="UniProtKB"/>
</dbReference>
<dbReference type="GO" id="GO:0005634">
    <property type="term" value="C:nucleus"/>
    <property type="evidence" value="ECO:0007669"/>
    <property type="project" value="UniProtKB-SubCell"/>
</dbReference>
<dbReference type="GO" id="GO:0006325">
    <property type="term" value="P:chromatin organization"/>
    <property type="evidence" value="ECO:0007669"/>
    <property type="project" value="UniProtKB-KW"/>
</dbReference>
<dbReference type="GO" id="GO:0045944">
    <property type="term" value="P:positive regulation of transcription by RNA polymerase II"/>
    <property type="evidence" value="ECO:0000318"/>
    <property type="project" value="GO_Central"/>
</dbReference>
<dbReference type="GO" id="GO:1903108">
    <property type="term" value="P:regulation of mitochondrial transcription"/>
    <property type="evidence" value="ECO:0000250"/>
    <property type="project" value="UniProtKB"/>
</dbReference>
<dbReference type="FunFam" id="3.40.50.1820:FF:000032">
    <property type="entry name" value="KAT8 regulatory NSL complex subunit 3 isoform X2"/>
    <property type="match status" value="1"/>
</dbReference>
<dbReference type="Gene3D" id="3.40.50.1820">
    <property type="entry name" value="alpha/beta hydrolase"/>
    <property type="match status" value="1"/>
</dbReference>
<dbReference type="InterPro" id="IPR029058">
    <property type="entry name" value="AB_hydrolase_fold"/>
</dbReference>
<dbReference type="InterPro" id="IPR046879">
    <property type="entry name" value="KANL3/Tex30_Abhydrolase"/>
</dbReference>
<dbReference type="InterPro" id="IPR056519">
    <property type="entry name" value="KANSL3_1st"/>
</dbReference>
<dbReference type="InterPro" id="IPR026555">
    <property type="entry name" value="NSL3/Tex30"/>
</dbReference>
<dbReference type="PANTHER" id="PTHR13136:SF16">
    <property type="entry name" value="KAT8 REGULATORY NSL COMPLEX SUBUNIT 3"/>
    <property type="match status" value="1"/>
</dbReference>
<dbReference type="PANTHER" id="PTHR13136">
    <property type="entry name" value="TESTIS DEVELOPMENT PROTEIN PRTD"/>
    <property type="match status" value="1"/>
</dbReference>
<dbReference type="Pfam" id="PF20408">
    <property type="entry name" value="Abhydrolase_11"/>
    <property type="match status" value="1"/>
</dbReference>
<dbReference type="Pfam" id="PF23154">
    <property type="entry name" value="KANSL3_1st"/>
    <property type="match status" value="1"/>
</dbReference>
<dbReference type="SUPFAM" id="SSF53474">
    <property type="entry name" value="alpha/beta-Hydrolases"/>
    <property type="match status" value="1"/>
</dbReference>
<proteinExistence type="evidence at transcript level"/>
<protein>
    <recommendedName>
        <fullName>KAT8 regulatory NSL complex subunit 3</fullName>
    </recommendedName>
    <alternativeName>
        <fullName>NSL complex protein NSL3</fullName>
    </alternativeName>
    <alternativeName>
        <fullName>Non-specific lethal 3 homolog</fullName>
    </alternativeName>
</protein>
<name>KANL3_RAT</name>
<reference key="1">
    <citation type="journal article" date="2004" name="Genome Res.">
        <title>The status, quality, and expansion of the NIH full-length cDNA project: the Mammalian Gene Collection (MGC).</title>
        <authorList>
            <consortium name="The MGC Project Team"/>
        </authorList>
    </citation>
    <scope>NUCLEOTIDE SEQUENCE [LARGE SCALE MRNA]</scope>
    <source>
        <tissue>Placenta</tissue>
    </source>
</reference>
<sequence length="877" mass="93035">MAHRGGERDFQTSARRMGTSLLFQLSVHERELDLVFLDHSYAKPWSAHPDASSARPTRMLFVTPRRQQENTIESDVPIDVETVTATPAPLYDNQKARSVMNECERHVIFARTDADAPPPPEDWEEHVNRTGWTVAQNKLFNKILKALQSDRLARLANEGACNEPVLRRVAVDKCARRVRQALASVSWDTKLIQWLHTTLVETLSLPMLAAYLDALQTLKGKIPTLIDRMLVSSNTKTGAAGAEALSLLLKRPWDPAVGVLSHNKPSKLPGSPLILIASSGPSSSVFPASRRHRFWQSQLSCLGKVIPVATHLLNNGSGVGVLQCLEHMTGAVRSKVLEIHSHFPHKPIILIGWSTGALVACHVSVMEYVTAVVCLGFPLLTVDGPRGDVDDPLLDMKTPVLFVIGQNSLQCHPEAMEDFREKIRAENSLVVVGGADDNLRISKAKKKSEGLTQSMVDRCIQDEIVDFLTGVLTRAEGHVGSEPRDQDAEKKKKPRDVARRDLAFEIPERGSRPASPAARLPTSPSGSEDLSSVSSSPTSSPKTKGTTVTSAQKSSQIGTSQLLRRHVQRTDAVLTHRQAQVPISSEPVEEVEKEELRVQLKRHHPSSPLPGAKPSKRPKIKVSLISQGDTVGGPCTLSQGGTPEAAGGKPITMTLGASAGAKELTGLLTTAKSSSSEGGVTASAAPSVASSNATPNAIHTLQSRLVATSPGSSLPGAASASSLLQGLSFSLQDISSKTTGLPGSPSPGPAPQATSVKLPTPMQSLGAITTGTSTIVRTIPVATTLSSLAATPGGKPTAIHQLLTNGGLAKLASSLPGLAQISNQASGLKVPTTITLTLRGQPSRITTLSPMGSGAAASEEPNSQMLPSSSQRLPPAP</sequence>
<evidence type="ECO:0000250" key="1">
    <source>
        <dbReference type="UniProtKB" id="A2RSY1"/>
    </source>
</evidence>
<evidence type="ECO:0000250" key="2">
    <source>
        <dbReference type="UniProtKB" id="Q9P2N6"/>
    </source>
</evidence>
<evidence type="ECO:0000256" key="3">
    <source>
        <dbReference type="SAM" id="MobiDB-lite"/>
    </source>
</evidence>
<feature type="chain" id="PRO_0000287139" description="KAT8 regulatory NSL complex subunit 3">
    <location>
        <begin position="1"/>
        <end position="877"/>
    </location>
</feature>
<feature type="region of interest" description="Disordered" evidence="3">
    <location>
        <begin position="478"/>
        <end position="561"/>
    </location>
</feature>
<feature type="region of interest" description="Disordered" evidence="3">
    <location>
        <begin position="599"/>
        <end position="618"/>
    </location>
</feature>
<feature type="region of interest" description="Disordered" evidence="3">
    <location>
        <begin position="670"/>
        <end position="691"/>
    </location>
</feature>
<feature type="region of interest" description="Disordered" evidence="3">
    <location>
        <begin position="735"/>
        <end position="757"/>
    </location>
</feature>
<feature type="region of interest" description="Disordered" evidence="3">
    <location>
        <begin position="843"/>
        <end position="877"/>
    </location>
</feature>
<feature type="compositionally biased region" description="Basic and acidic residues" evidence="3">
    <location>
        <begin position="478"/>
        <end position="511"/>
    </location>
</feature>
<feature type="compositionally biased region" description="Low complexity" evidence="3">
    <location>
        <begin position="523"/>
        <end position="550"/>
    </location>
</feature>
<feature type="compositionally biased region" description="Polar residues" evidence="3">
    <location>
        <begin position="551"/>
        <end position="561"/>
    </location>
</feature>
<feature type="compositionally biased region" description="Low complexity" evidence="3">
    <location>
        <begin position="680"/>
        <end position="691"/>
    </location>
</feature>
<feature type="compositionally biased region" description="Polar residues" evidence="3">
    <location>
        <begin position="860"/>
        <end position="877"/>
    </location>
</feature>
<feature type="modified residue" description="Phosphoserine" evidence="2">
    <location>
        <position position="523"/>
    </location>
</feature>
<feature type="modified residue" description="Phosphoserine" evidence="1">
    <location>
        <position position="536"/>
    </location>
</feature>
<feature type="modified residue" description="Phosphoserine" evidence="2">
    <location>
        <position position="540"/>
    </location>
</feature>
<feature type="modified residue" description="Phosphoserine" evidence="2">
    <location>
        <position position="746"/>
    </location>
</feature>
<organism>
    <name type="scientific">Rattus norvegicus</name>
    <name type="common">Rat</name>
    <dbReference type="NCBI Taxonomy" id="10116"/>
    <lineage>
        <taxon>Eukaryota</taxon>
        <taxon>Metazoa</taxon>
        <taxon>Chordata</taxon>
        <taxon>Craniata</taxon>
        <taxon>Vertebrata</taxon>
        <taxon>Euteleostomi</taxon>
        <taxon>Mammalia</taxon>
        <taxon>Eutheria</taxon>
        <taxon>Euarchontoglires</taxon>
        <taxon>Glires</taxon>
        <taxon>Rodentia</taxon>
        <taxon>Myomorpha</taxon>
        <taxon>Muroidea</taxon>
        <taxon>Muridae</taxon>
        <taxon>Murinae</taxon>
        <taxon>Rattus</taxon>
    </lineage>
</organism>
<gene>
    <name type="primary">Kansl3</name>
    <name type="synonym">Nsl3</name>
</gene>
<comment type="function">
    <text evidence="1 2">Non-catalytic component of the NSL histone acetyltransferase complex, a multiprotein complex that mediates histone H4 acetylation at 'Lys-5'- and 'Lys-8' (H4K5ac and H4K8ac) at transcription start sites and promotes transcription initiation. The NSL complex also acts as a regulator of gene expression in mitochondria. Within the NSL complex, KANSL3 is required to promote KAT8 association with mitochondrial DNA. Required for transcription of intraciliary transport genes in both ciliated and non-ciliated cells. This is necessary for cilium assembly in ciliated cells and for organization of the microtubule cytoskeleton in non-ciliated cells. Also required within the NSL complex to maintain nuclear architecture stability by promoting KAT8-mediated acetylation of lamin LMNA. Plays an essential role in spindle assembly during mitosis. Acts as a microtubule minus-end binding protein which stabilizes microtubules and promotes their assembly. Indispensable during early embryonic development where it is required for proper lineage specification and maintenance during peri-implantation development and is essential for implantation.</text>
</comment>
<comment type="subunit">
    <text evidence="2">Component of the NSL complex at least composed of KAT8/MOF, KANSL1, KANSL2, KANSL3, MCRS1, PHF20, OGT1/OGT, WDR5 and HCFC1.</text>
</comment>
<comment type="subcellular location">
    <subcellularLocation>
        <location evidence="2">Nucleus</location>
    </subcellularLocation>
    <subcellularLocation>
        <location evidence="2">Mitochondrion</location>
    </subcellularLocation>
    <subcellularLocation>
        <location evidence="2">Cytoplasm</location>
        <location evidence="2">Cytoskeleton</location>
        <location evidence="2">Spindle pole</location>
    </subcellularLocation>
    <text evidence="2">Concentrated in the nucleus during interphase but displays a marked relocalization to the spindle poles during mitosis.</text>
</comment>
<keyword id="KW-0156">Chromatin regulator</keyword>
<keyword id="KW-0963">Cytoplasm</keyword>
<keyword id="KW-0206">Cytoskeleton</keyword>
<keyword id="KW-0493">Microtubule</keyword>
<keyword id="KW-0496">Mitochondrion</keyword>
<keyword id="KW-0539">Nucleus</keyword>
<keyword id="KW-0597">Phosphoprotein</keyword>
<keyword id="KW-1185">Reference proteome</keyword>
<accession>Q3KR73</accession>